<accession>Q8NYU1</accession>
<sequence length="256" mass="29790">MIKRVNKLVLGISLLFLVISITAGCGMGKEAEIKKSFEKTLSMYPIKNLEDLYDKEGYRDDQFDKNDKGTWIVNSQMAIQNKGEALKIKGMLLKIDRNTRSAKGFYYTNEIKTEKYEVAQDNQKKYPVKMINNKFISTEEVKEENIKKEIENFKFFAQYSNFKDLMNYKDGDISYNPEVPSYSAQYQLTNDDYNVKQLRKRYDIPTNKAPKLLLKGTGNLKGSSVGYKKIEFTFLENKNENIYFTDSLHLKPSEDK</sequence>
<feature type="signal peptide" evidence="1">
    <location>
        <begin position="1"/>
        <end position="24"/>
    </location>
</feature>
<feature type="chain" id="PRO_0000282173" description="Uncharacterized lipoprotein MW0072">
    <location>
        <begin position="25"/>
        <end position="256"/>
    </location>
</feature>
<feature type="lipid moiety-binding region" description="N-palmitoyl cysteine" evidence="1">
    <location>
        <position position="25"/>
    </location>
</feature>
<feature type="lipid moiety-binding region" description="S-diacylglycerol cysteine" evidence="1">
    <location>
        <position position="25"/>
    </location>
</feature>
<keyword id="KW-1003">Cell membrane</keyword>
<keyword id="KW-0449">Lipoprotein</keyword>
<keyword id="KW-0472">Membrane</keyword>
<keyword id="KW-0564">Palmitate</keyword>
<keyword id="KW-0732">Signal</keyword>
<gene>
    <name type="ordered locus">MW0072</name>
</gene>
<evidence type="ECO:0000255" key="1">
    <source>
        <dbReference type="PROSITE-ProRule" id="PRU00303"/>
    </source>
</evidence>
<evidence type="ECO:0000305" key="2"/>
<comment type="subcellular location">
    <subcellularLocation>
        <location evidence="1">Cell membrane</location>
        <topology evidence="1">Lipid-anchor</topology>
    </subcellularLocation>
</comment>
<comment type="similarity">
    <text evidence="2">Belongs to the staphylococcal tandem lipoprotein family.</text>
</comment>
<proteinExistence type="inferred from homology"/>
<name>Y072_STAAW</name>
<organism>
    <name type="scientific">Staphylococcus aureus (strain MW2)</name>
    <dbReference type="NCBI Taxonomy" id="196620"/>
    <lineage>
        <taxon>Bacteria</taxon>
        <taxon>Bacillati</taxon>
        <taxon>Bacillota</taxon>
        <taxon>Bacilli</taxon>
        <taxon>Bacillales</taxon>
        <taxon>Staphylococcaceae</taxon>
        <taxon>Staphylococcus</taxon>
    </lineage>
</organism>
<dbReference type="EMBL" id="BA000033">
    <property type="protein sequence ID" value="BAB93937.1"/>
    <property type="molecule type" value="Genomic_DNA"/>
</dbReference>
<dbReference type="RefSeq" id="WP_000597213.1">
    <property type="nucleotide sequence ID" value="NC_003923.1"/>
</dbReference>
<dbReference type="SMR" id="Q8NYU1"/>
<dbReference type="KEGG" id="sam:MW0072"/>
<dbReference type="HOGENOM" id="CLU_071589_0_1_9"/>
<dbReference type="GO" id="GO:0005886">
    <property type="term" value="C:plasma membrane"/>
    <property type="evidence" value="ECO:0007669"/>
    <property type="project" value="UniProtKB-SubCell"/>
</dbReference>
<dbReference type="Gene3D" id="2.50.20.40">
    <property type="match status" value="1"/>
</dbReference>
<dbReference type="InterPro" id="IPR007595">
    <property type="entry name" value="Csa"/>
</dbReference>
<dbReference type="InterPro" id="IPR038641">
    <property type="entry name" value="Csa_sf"/>
</dbReference>
<dbReference type="NCBIfam" id="TIGR01742">
    <property type="entry name" value="SA_tandem_lipo"/>
    <property type="match status" value="1"/>
</dbReference>
<dbReference type="Pfam" id="PF04507">
    <property type="entry name" value="DUF576"/>
    <property type="match status" value="1"/>
</dbReference>
<dbReference type="PROSITE" id="PS51257">
    <property type="entry name" value="PROKAR_LIPOPROTEIN"/>
    <property type="match status" value="1"/>
</dbReference>
<reference key="1">
    <citation type="journal article" date="2002" name="Lancet">
        <title>Genome and virulence determinants of high virulence community-acquired MRSA.</title>
        <authorList>
            <person name="Baba T."/>
            <person name="Takeuchi F."/>
            <person name="Kuroda M."/>
            <person name="Yuzawa H."/>
            <person name="Aoki K."/>
            <person name="Oguchi A."/>
            <person name="Nagai Y."/>
            <person name="Iwama N."/>
            <person name="Asano K."/>
            <person name="Naimi T."/>
            <person name="Kuroda H."/>
            <person name="Cui L."/>
            <person name="Yamamoto K."/>
            <person name="Hiramatsu K."/>
        </authorList>
    </citation>
    <scope>NUCLEOTIDE SEQUENCE [LARGE SCALE GENOMIC DNA]</scope>
    <source>
        <strain>MW2</strain>
    </source>
</reference>
<protein>
    <recommendedName>
        <fullName>Uncharacterized lipoprotein MW0072</fullName>
    </recommendedName>
</protein>